<evidence type="ECO:0000255" key="1">
    <source>
        <dbReference type="HAMAP-Rule" id="MF_00595"/>
    </source>
</evidence>
<dbReference type="EC" id="4.1.1.31" evidence="1"/>
<dbReference type="EMBL" id="AM406670">
    <property type="protein sequence ID" value="CAL93609.1"/>
    <property type="molecule type" value="Genomic_DNA"/>
</dbReference>
<dbReference type="RefSeq" id="WP_011764726.1">
    <property type="nucleotide sequence ID" value="NC_008702.1"/>
</dbReference>
<dbReference type="SMR" id="A1K454"/>
<dbReference type="STRING" id="62928.azo0992"/>
<dbReference type="KEGG" id="aoa:dqs_1093"/>
<dbReference type="KEGG" id="azo:azo0992"/>
<dbReference type="eggNOG" id="COG2352">
    <property type="taxonomic scope" value="Bacteria"/>
</dbReference>
<dbReference type="HOGENOM" id="CLU_006557_2_0_4"/>
<dbReference type="OrthoDB" id="9768133at2"/>
<dbReference type="Proteomes" id="UP000002588">
    <property type="component" value="Chromosome"/>
</dbReference>
<dbReference type="GO" id="GO:0005829">
    <property type="term" value="C:cytosol"/>
    <property type="evidence" value="ECO:0007669"/>
    <property type="project" value="TreeGrafter"/>
</dbReference>
<dbReference type="GO" id="GO:0000287">
    <property type="term" value="F:magnesium ion binding"/>
    <property type="evidence" value="ECO:0007669"/>
    <property type="project" value="UniProtKB-UniRule"/>
</dbReference>
<dbReference type="GO" id="GO:0008964">
    <property type="term" value="F:phosphoenolpyruvate carboxylase activity"/>
    <property type="evidence" value="ECO:0007669"/>
    <property type="project" value="UniProtKB-UniRule"/>
</dbReference>
<dbReference type="GO" id="GO:0015977">
    <property type="term" value="P:carbon fixation"/>
    <property type="evidence" value="ECO:0007669"/>
    <property type="project" value="UniProtKB-UniRule"/>
</dbReference>
<dbReference type="GO" id="GO:0006107">
    <property type="term" value="P:oxaloacetate metabolic process"/>
    <property type="evidence" value="ECO:0007669"/>
    <property type="project" value="UniProtKB-UniRule"/>
</dbReference>
<dbReference type="GO" id="GO:0006099">
    <property type="term" value="P:tricarboxylic acid cycle"/>
    <property type="evidence" value="ECO:0007669"/>
    <property type="project" value="InterPro"/>
</dbReference>
<dbReference type="Gene3D" id="1.20.1440.90">
    <property type="entry name" value="Phosphoenolpyruvate/pyruvate domain"/>
    <property type="match status" value="1"/>
</dbReference>
<dbReference type="HAMAP" id="MF_00595">
    <property type="entry name" value="PEPcase_type1"/>
    <property type="match status" value="1"/>
</dbReference>
<dbReference type="InterPro" id="IPR021135">
    <property type="entry name" value="PEP_COase"/>
</dbReference>
<dbReference type="InterPro" id="IPR022805">
    <property type="entry name" value="PEP_COase_bac/pln-type"/>
</dbReference>
<dbReference type="InterPro" id="IPR018129">
    <property type="entry name" value="PEP_COase_Lys_AS"/>
</dbReference>
<dbReference type="InterPro" id="IPR033129">
    <property type="entry name" value="PEPCASE_His_AS"/>
</dbReference>
<dbReference type="InterPro" id="IPR015813">
    <property type="entry name" value="Pyrv/PenolPyrv_kinase-like_dom"/>
</dbReference>
<dbReference type="NCBIfam" id="NF000584">
    <property type="entry name" value="PRK00009.1"/>
    <property type="match status" value="1"/>
</dbReference>
<dbReference type="PANTHER" id="PTHR30523">
    <property type="entry name" value="PHOSPHOENOLPYRUVATE CARBOXYLASE"/>
    <property type="match status" value="1"/>
</dbReference>
<dbReference type="PANTHER" id="PTHR30523:SF6">
    <property type="entry name" value="PHOSPHOENOLPYRUVATE CARBOXYLASE"/>
    <property type="match status" value="1"/>
</dbReference>
<dbReference type="Pfam" id="PF00311">
    <property type="entry name" value="PEPcase"/>
    <property type="match status" value="1"/>
</dbReference>
<dbReference type="PRINTS" id="PR00150">
    <property type="entry name" value="PEPCARBXLASE"/>
</dbReference>
<dbReference type="SUPFAM" id="SSF51621">
    <property type="entry name" value="Phosphoenolpyruvate/pyruvate domain"/>
    <property type="match status" value="1"/>
</dbReference>
<dbReference type="PROSITE" id="PS00781">
    <property type="entry name" value="PEPCASE_1"/>
    <property type="match status" value="1"/>
</dbReference>
<dbReference type="PROSITE" id="PS00393">
    <property type="entry name" value="PEPCASE_2"/>
    <property type="match status" value="1"/>
</dbReference>
<proteinExistence type="inferred from homology"/>
<sequence length="917" mass="101775">MTPDKDAPLREDIRLLGRLLGDTVRDQQGAASFDLIERIRQTSVRFRRDEDLAARRELEDTLDALSREQTIQVVRAFSYFSHLANIAEDQHHIRRSRAHLLAGSAPREGSLAHAVGHALDEQRLDPTDLAAFFDTALISPVLTAHPTEVQRKSILNCQTVIARLLDERDRMQLTPDEAEANLDALRRAVLTLWQTRMLRPAKLSVIDEVNNGLSYFETTFLRELPRLYAALEDRLAGAQPALANHELPAFLQVGSWIGGDRDGNPYVTADVLEEALAMQARVALDYYLDELHTLGSQLSLSQGLVGASDALLALADRSPDQSPHRSDEPYRRAIAGIYARLSATYRNLLGHPPARHAVAEAEPYADVAALADDLDTLHRSLVANGTAALARGRLRHLRRAVRVFGFHLAPIDLRQNSDVHERVVAELLEVARPGAAYLAQDEAGRCALLLDELATARPLASPHVRYSDDSEGELAIFRAARRAHLRYGRGAIHNCIISKTDDLSDLLELAVLLKEAGLLRPLEKALDVNIVPLFETIGDLENAAGVMDRLFSIPVYRELLAARDQTQEVMLGYSDSNKDGGFLTSGWALYKAEGELVEVFGRHGVRLRLFHGRGGSVGRGGGPSYQAILAQPDGAVQGQIRLTEQGEVIAAKYGNPEVGRRNLEVLVAATLETSLRRDGGDATPRTFLDTMQALSDAAFTCYRGLVYETPGFEQYFWESTVISEIAGLNIGSRPASRKKGTRIDDLRAIPWVFSWSQCRLMLPGWFGFGSAVKQWLAAHPKDGLGLLQRMYREWSFFATLLSNMDMVLSKTDLAIASRYAELVKDPVLRDSIFERIRSEWKDTVDALLAITEQVELLDANPLLKRSIRNRFPYLDPLNHVQVELLRRHREGNGEDARIRNGIHISINGIAAGLRNSG</sequence>
<keyword id="KW-0120">Carbon dioxide fixation</keyword>
<keyword id="KW-0456">Lyase</keyword>
<keyword id="KW-0460">Magnesium</keyword>
<keyword id="KW-1185">Reference proteome</keyword>
<feature type="chain" id="PRO_1000025548" description="Phosphoenolpyruvate carboxylase">
    <location>
        <begin position="1"/>
        <end position="917"/>
    </location>
</feature>
<feature type="active site" evidence="1">
    <location>
        <position position="145"/>
    </location>
</feature>
<feature type="active site" evidence="1">
    <location>
        <position position="578"/>
    </location>
</feature>
<accession>A1K454</accession>
<protein>
    <recommendedName>
        <fullName evidence="1">Phosphoenolpyruvate carboxylase</fullName>
        <shortName evidence="1">PEPC</shortName>
        <shortName evidence="1">PEPCase</shortName>
        <ecNumber evidence="1">4.1.1.31</ecNumber>
    </recommendedName>
</protein>
<gene>
    <name evidence="1" type="primary">ppc</name>
    <name type="ordered locus">azo0992</name>
</gene>
<comment type="function">
    <text evidence="1">Forms oxaloacetate, a four-carbon dicarboxylic acid source for the tricarboxylic acid cycle.</text>
</comment>
<comment type="catalytic activity">
    <reaction evidence="1">
        <text>oxaloacetate + phosphate = phosphoenolpyruvate + hydrogencarbonate</text>
        <dbReference type="Rhea" id="RHEA:28370"/>
        <dbReference type="ChEBI" id="CHEBI:16452"/>
        <dbReference type="ChEBI" id="CHEBI:17544"/>
        <dbReference type="ChEBI" id="CHEBI:43474"/>
        <dbReference type="ChEBI" id="CHEBI:58702"/>
        <dbReference type="EC" id="4.1.1.31"/>
    </reaction>
</comment>
<comment type="cofactor">
    <cofactor evidence="1">
        <name>Mg(2+)</name>
        <dbReference type="ChEBI" id="CHEBI:18420"/>
    </cofactor>
</comment>
<comment type="similarity">
    <text evidence="1">Belongs to the PEPCase type 1 family.</text>
</comment>
<reference key="1">
    <citation type="journal article" date="2006" name="Nat. Biotechnol.">
        <title>Complete genome of the mutualistic, N2-fixing grass endophyte Azoarcus sp. strain BH72.</title>
        <authorList>
            <person name="Krause A."/>
            <person name="Ramakumar A."/>
            <person name="Bartels D."/>
            <person name="Battistoni F."/>
            <person name="Bekel T."/>
            <person name="Boch J."/>
            <person name="Boehm M."/>
            <person name="Friedrich F."/>
            <person name="Hurek T."/>
            <person name="Krause L."/>
            <person name="Linke B."/>
            <person name="McHardy A.C."/>
            <person name="Sarkar A."/>
            <person name="Schneiker S."/>
            <person name="Syed A.A."/>
            <person name="Thauer R."/>
            <person name="Vorhoelter F.-J."/>
            <person name="Weidner S."/>
            <person name="Puehler A."/>
            <person name="Reinhold-Hurek B."/>
            <person name="Kaiser O."/>
            <person name="Goesmann A."/>
        </authorList>
    </citation>
    <scope>NUCLEOTIDE SEQUENCE [LARGE SCALE GENOMIC DNA]</scope>
    <source>
        <strain>BH72</strain>
    </source>
</reference>
<name>CAPP_AZOSB</name>
<organism>
    <name type="scientific">Azoarcus sp. (strain BH72)</name>
    <dbReference type="NCBI Taxonomy" id="418699"/>
    <lineage>
        <taxon>Bacteria</taxon>
        <taxon>Pseudomonadati</taxon>
        <taxon>Pseudomonadota</taxon>
        <taxon>Betaproteobacteria</taxon>
        <taxon>Rhodocyclales</taxon>
        <taxon>Zoogloeaceae</taxon>
        <taxon>Azoarcus</taxon>
    </lineage>
</organism>